<feature type="chain" id="PRO_1000096963" description="3-methyl-2-oxobutanoate hydroxymethyltransferase">
    <location>
        <begin position="1"/>
        <end position="264"/>
    </location>
</feature>
<feature type="active site" description="Proton acceptor" evidence="1">
    <location>
        <position position="181"/>
    </location>
</feature>
<feature type="binding site" evidence="1">
    <location>
        <begin position="45"/>
        <end position="46"/>
    </location>
    <ligand>
        <name>3-methyl-2-oxobutanoate</name>
        <dbReference type="ChEBI" id="CHEBI:11851"/>
    </ligand>
</feature>
<feature type="binding site" evidence="1">
    <location>
        <position position="45"/>
    </location>
    <ligand>
        <name>Mg(2+)</name>
        <dbReference type="ChEBI" id="CHEBI:18420"/>
    </ligand>
</feature>
<feature type="binding site" evidence="1">
    <location>
        <position position="84"/>
    </location>
    <ligand>
        <name>3-methyl-2-oxobutanoate</name>
        <dbReference type="ChEBI" id="CHEBI:11851"/>
    </ligand>
</feature>
<feature type="binding site" evidence="1">
    <location>
        <position position="84"/>
    </location>
    <ligand>
        <name>Mg(2+)</name>
        <dbReference type="ChEBI" id="CHEBI:18420"/>
    </ligand>
</feature>
<feature type="binding site" evidence="1">
    <location>
        <position position="112"/>
    </location>
    <ligand>
        <name>3-methyl-2-oxobutanoate</name>
        <dbReference type="ChEBI" id="CHEBI:11851"/>
    </ligand>
</feature>
<feature type="binding site" evidence="1">
    <location>
        <position position="114"/>
    </location>
    <ligand>
        <name>Mg(2+)</name>
        <dbReference type="ChEBI" id="CHEBI:18420"/>
    </ligand>
</feature>
<keyword id="KW-0963">Cytoplasm</keyword>
<keyword id="KW-0460">Magnesium</keyword>
<keyword id="KW-0479">Metal-binding</keyword>
<keyword id="KW-0566">Pantothenate biosynthesis</keyword>
<keyword id="KW-0808">Transferase</keyword>
<proteinExistence type="inferred from homology"/>
<evidence type="ECO:0000255" key="1">
    <source>
        <dbReference type="HAMAP-Rule" id="MF_00156"/>
    </source>
</evidence>
<comment type="function">
    <text evidence="1">Catalyzes the reversible reaction in which hydroxymethyl group from 5,10-methylenetetrahydrofolate is transferred onto alpha-ketoisovalerate to form ketopantoate.</text>
</comment>
<comment type="catalytic activity">
    <reaction evidence="1">
        <text>3-methyl-2-oxobutanoate + (6R)-5,10-methylene-5,6,7,8-tetrahydrofolate + H2O = 2-dehydropantoate + (6S)-5,6,7,8-tetrahydrofolate</text>
        <dbReference type="Rhea" id="RHEA:11824"/>
        <dbReference type="ChEBI" id="CHEBI:11561"/>
        <dbReference type="ChEBI" id="CHEBI:11851"/>
        <dbReference type="ChEBI" id="CHEBI:15377"/>
        <dbReference type="ChEBI" id="CHEBI:15636"/>
        <dbReference type="ChEBI" id="CHEBI:57453"/>
        <dbReference type="EC" id="2.1.2.11"/>
    </reaction>
</comment>
<comment type="cofactor">
    <cofactor evidence="1">
        <name>Mg(2+)</name>
        <dbReference type="ChEBI" id="CHEBI:18420"/>
    </cofactor>
    <text evidence="1">Binds 1 Mg(2+) ion per subunit.</text>
</comment>
<comment type="pathway">
    <text evidence="1">Cofactor biosynthesis; (R)-pantothenate biosynthesis; (R)-pantoate from 3-methyl-2-oxobutanoate: step 1/2.</text>
</comment>
<comment type="subunit">
    <text evidence="1">Homodecamer; pentamer of dimers.</text>
</comment>
<comment type="subcellular location">
    <subcellularLocation>
        <location evidence="1">Cytoplasm</location>
    </subcellularLocation>
</comment>
<comment type="similarity">
    <text evidence="1">Belongs to the PanB family.</text>
</comment>
<organism>
    <name type="scientific">Escherichia coli (strain SE11)</name>
    <dbReference type="NCBI Taxonomy" id="409438"/>
    <lineage>
        <taxon>Bacteria</taxon>
        <taxon>Pseudomonadati</taxon>
        <taxon>Pseudomonadota</taxon>
        <taxon>Gammaproteobacteria</taxon>
        <taxon>Enterobacterales</taxon>
        <taxon>Enterobacteriaceae</taxon>
        <taxon>Escherichia</taxon>
    </lineage>
</organism>
<gene>
    <name evidence="1" type="primary">panB</name>
    <name type="ordered locus">ECSE_0134</name>
</gene>
<accession>B6HZA9</accession>
<protein>
    <recommendedName>
        <fullName evidence="1">3-methyl-2-oxobutanoate hydroxymethyltransferase</fullName>
        <ecNumber evidence="1">2.1.2.11</ecNumber>
    </recommendedName>
    <alternativeName>
        <fullName evidence="1">Ketopantoate hydroxymethyltransferase</fullName>
        <shortName evidence="1">KPHMT</shortName>
    </alternativeName>
</protein>
<dbReference type="EC" id="2.1.2.11" evidence="1"/>
<dbReference type="EMBL" id="AP009240">
    <property type="protein sequence ID" value="BAG75658.1"/>
    <property type="molecule type" value="Genomic_DNA"/>
</dbReference>
<dbReference type="RefSeq" id="WP_000805455.1">
    <property type="nucleotide sequence ID" value="NC_011415.1"/>
</dbReference>
<dbReference type="SMR" id="B6HZA9"/>
<dbReference type="KEGG" id="ecy:ECSE_0134"/>
<dbReference type="HOGENOM" id="CLU_036645_1_0_6"/>
<dbReference type="UniPathway" id="UPA00028">
    <property type="reaction ID" value="UER00003"/>
</dbReference>
<dbReference type="Proteomes" id="UP000008199">
    <property type="component" value="Chromosome"/>
</dbReference>
<dbReference type="GO" id="GO:0005737">
    <property type="term" value="C:cytoplasm"/>
    <property type="evidence" value="ECO:0007669"/>
    <property type="project" value="UniProtKB-SubCell"/>
</dbReference>
<dbReference type="GO" id="GO:0003864">
    <property type="term" value="F:3-methyl-2-oxobutanoate hydroxymethyltransferase activity"/>
    <property type="evidence" value="ECO:0007669"/>
    <property type="project" value="UniProtKB-UniRule"/>
</dbReference>
<dbReference type="GO" id="GO:0000287">
    <property type="term" value="F:magnesium ion binding"/>
    <property type="evidence" value="ECO:0007669"/>
    <property type="project" value="TreeGrafter"/>
</dbReference>
<dbReference type="GO" id="GO:0015940">
    <property type="term" value="P:pantothenate biosynthetic process"/>
    <property type="evidence" value="ECO:0007669"/>
    <property type="project" value="UniProtKB-UniRule"/>
</dbReference>
<dbReference type="CDD" id="cd06557">
    <property type="entry name" value="KPHMT-like"/>
    <property type="match status" value="1"/>
</dbReference>
<dbReference type="FunFam" id="3.20.20.60:FF:000003">
    <property type="entry name" value="3-methyl-2-oxobutanoate hydroxymethyltransferase"/>
    <property type="match status" value="1"/>
</dbReference>
<dbReference type="Gene3D" id="3.20.20.60">
    <property type="entry name" value="Phosphoenolpyruvate-binding domains"/>
    <property type="match status" value="1"/>
</dbReference>
<dbReference type="HAMAP" id="MF_00156">
    <property type="entry name" value="PanB"/>
    <property type="match status" value="1"/>
</dbReference>
<dbReference type="InterPro" id="IPR003700">
    <property type="entry name" value="Pantoate_hydroxy_MeTrfase"/>
</dbReference>
<dbReference type="InterPro" id="IPR015813">
    <property type="entry name" value="Pyrv/PenolPyrv_kinase-like_dom"/>
</dbReference>
<dbReference type="InterPro" id="IPR040442">
    <property type="entry name" value="Pyrv_kinase-like_dom_sf"/>
</dbReference>
<dbReference type="NCBIfam" id="TIGR00222">
    <property type="entry name" value="panB"/>
    <property type="match status" value="1"/>
</dbReference>
<dbReference type="NCBIfam" id="NF001452">
    <property type="entry name" value="PRK00311.1"/>
    <property type="match status" value="1"/>
</dbReference>
<dbReference type="PANTHER" id="PTHR20881">
    <property type="entry name" value="3-METHYL-2-OXOBUTANOATE HYDROXYMETHYLTRANSFERASE"/>
    <property type="match status" value="1"/>
</dbReference>
<dbReference type="PANTHER" id="PTHR20881:SF0">
    <property type="entry name" value="3-METHYL-2-OXOBUTANOATE HYDROXYMETHYLTRANSFERASE"/>
    <property type="match status" value="1"/>
</dbReference>
<dbReference type="Pfam" id="PF02548">
    <property type="entry name" value="Pantoate_transf"/>
    <property type="match status" value="1"/>
</dbReference>
<dbReference type="PIRSF" id="PIRSF000388">
    <property type="entry name" value="Pantoate_hydroxy_MeTrfase"/>
    <property type="match status" value="1"/>
</dbReference>
<dbReference type="SUPFAM" id="SSF51621">
    <property type="entry name" value="Phosphoenolpyruvate/pyruvate domain"/>
    <property type="match status" value="1"/>
</dbReference>
<sequence length="264" mass="28179">MKPTTIASLQKCKQDKKRFATITAYDYSFAKLFADEGLNVMLVGDSLGMTVQGHDSTLPVTVEDIAYHTAAVRRGAPNCLLLADLPFMAYATPEQAFENAATVMRAGANMVKIEGGEWLVETVKMLTERAVPVCGHLGLTPQSVNIFGGYKVQGRGDEAGDQLLSDALALEAAGAQLLVLECVPVELAKRITEALAIPVIGIGAGNVTDGQILVMHDAFGITGGHIPKFAKNFLAETGDIRAAVRQYMAEVESGVYPGEEHSFH</sequence>
<reference key="1">
    <citation type="journal article" date="2008" name="DNA Res.">
        <title>Complete genome sequence and comparative analysis of the wild-type commensal Escherichia coli strain SE11 isolated from a healthy adult.</title>
        <authorList>
            <person name="Oshima K."/>
            <person name="Toh H."/>
            <person name="Ogura Y."/>
            <person name="Sasamoto H."/>
            <person name="Morita H."/>
            <person name="Park S.-H."/>
            <person name="Ooka T."/>
            <person name="Iyoda S."/>
            <person name="Taylor T.D."/>
            <person name="Hayashi T."/>
            <person name="Itoh K."/>
            <person name="Hattori M."/>
        </authorList>
    </citation>
    <scope>NUCLEOTIDE SEQUENCE [LARGE SCALE GENOMIC DNA]</scope>
    <source>
        <strain>SE11</strain>
    </source>
</reference>
<name>PANB_ECOSE</name>